<protein>
    <recommendedName>
        <fullName>Nicotinamide-nucleotide adenylyltransferase</fullName>
        <ecNumber>2.7.7.1</ecNumber>
    </recommendedName>
    <alternativeName>
        <fullName>NAD(+) diphosphorylase</fullName>
    </alternativeName>
    <alternativeName>
        <fullName>NAD(+) pyrophosphorylase</fullName>
    </alternativeName>
    <alternativeName>
        <fullName>NMN adenylyltransferase</fullName>
    </alternativeName>
</protein>
<proteinExistence type="evidence at protein level"/>
<feature type="chain" id="PRO_0000134995" description="Nicotinamide-nucleotide adenylyltransferase">
    <location>
        <begin position="1"/>
        <end position="178"/>
    </location>
</feature>
<feature type="strand" evidence="3">
    <location>
        <begin position="2"/>
        <end position="7"/>
    </location>
</feature>
<feature type="helix" evidence="3">
    <location>
        <begin position="14"/>
        <end position="23"/>
    </location>
</feature>
<feature type="turn" evidence="3">
    <location>
        <begin position="24"/>
        <end position="26"/>
    </location>
</feature>
<feature type="strand" evidence="3">
    <location>
        <begin position="28"/>
        <end position="34"/>
    </location>
</feature>
<feature type="strand" evidence="3">
    <location>
        <begin position="41"/>
        <end position="45"/>
    </location>
</feature>
<feature type="helix" evidence="3">
    <location>
        <begin position="49"/>
        <end position="62"/>
    </location>
</feature>
<feature type="helix" evidence="3">
    <location>
        <begin position="67"/>
        <end position="69"/>
    </location>
</feature>
<feature type="strand" evidence="3">
    <location>
        <begin position="70"/>
        <end position="74"/>
    </location>
</feature>
<feature type="helix" evidence="3">
    <location>
        <begin position="81"/>
        <end position="91"/>
    </location>
</feature>
<feature type="strand" evidence="3">
    <location>
        <begin position="96"/>
        <end position="99"/>
    </location>
</feature>
<feature type="helix" evidence="3">
    <location>
        <begin position="103"/>
        <end position="111"/>
    </location>
</feature>
<feature type="strand" evidence="4">
    <location>
        <begin position="115"/>
        <end position="117"/>
    </location>
</feature>
<feature type="turn" evidence="3">
    <location>
        <begin position="124"/>
        <end position="126"/>
    </location>
</feature>
<feature type="helix" evidence="3">
    <location>
        <begin position="129"/>
        <end position="138"/>
    </location>
</feature>
<feature type="helix" evidence="3">
    <location>
        <begin position="143"/>
        <end position="145"/>
    </location>
</feature>
<feature type="helix" evidence="3">
    <location>
        <begin position="148"/>
        <end position="156"/>
    </location>
</feature>
<feature type="helix" evidence="3">
    <location>
        <begin position="159"/>
        <end position="166"/>
    </location>
</feature>
<keyword id="KW-0002">3D-structure</keyword>
<keyword id="KW-0067">ATP-binding</keyword>
<keyword id="KW-0963">Cytoplasm</keyword>
<keyword id="KW-0520">NAD</keyword>
<keyword id="KW-0547">Nucleotide-binding</keyword>
<keyword id="KW-0548">Nucleotidyltransferase</keyword>
<keyword id="KW-0662">Pyridine nucleotide biosynthesis</keyword>
<keyword id="KW-1185">Reference proteome</keyword>
<keyword id="KW-0808">Transferase</keyword>
<accession>O26253</accession>
<sequence length="178" mass="20207">MRGLLVGRMQPFHRGHLQVIKSILEEVDELIICIGSAQLSHSIRDPFTAGERVMMLTKALSENGIPASRYYIIPVQDIECNALWVGHIKMLTPPFDRVYSGNPLVQRLFSEDGYEVTAPPLFYRDRYSGTEVRRRMLDDGDWRSLLPESVVEVIDEINGVERIKHLAKKEVSELGGIS</sequence>
<gene>
    <name type="ordered locus">MTH_150</name>
</gene>
<dbReference type="EC" id="2.7.7.1"/>
<dbReference type="EMBL" id="AE000666">
    <property type="protein sequence ID" value="AAB84656.1"/>
    <property type="status" value="ALT_INIT"/>
    <property type="molecule type" value="Genomic_DNA"/>
</dbReference>
<dbReference type="PIR" id="A69067">
    <property type="entry name" value="A69067"/>
</dbReference>
<dbReference type="RefSeq" id="WP_048060754.1">
    <property type="nucleotide sequence ID" value="NC_000916.1"/>
</dbReference>
<dbReference type="PDB" id="1EJ2">
    <property type="method" value="X-ray"/>
    <property type="resolution" value="1.90 A"/>
    <property type="chains" value="A=1-178"/>
</dbReference>
<dbReference type="PDB" id="1HYB">
    <property type="method" value="X-ray"/>
    <property type="resolution" value="2.00 A"/>
    <property type="chains" value="A=1-178"/>
</dbReference>
<dbReference type="PDB" id="1M8F">
    <property type="method" value="X-ray"/>
    <property type="resolution" value="2.40 A"/>
    <property type="chains" value="A=1-178"/>
</dbReference>
<dbReference type="PDB" id="1M8G">
    <property type="method" value="X-ray"/>
    <property type="resolution" value="2.00 A"/>
    <property type="chains" value="A=1-178"/>
</dbReference>
<dbReference type="PDB" id="1M8J">
    <property type="method" value="X-ray"/>
    <property type="resolution" value="2.40 A"/>
    <property type="chains" value="A=1-178"/>
</dbReference>
<dbReference type="PDB" id="1M8K">
    <property type="method" value="X-ray"/>
    <property type="resolution" value="3.00 A"/>
    <property type="chains" value="A/B/C=1-178"/>
</dbReference>
<dbReference type="PDB" id="4YP5">
    <property type="method" value="X-ray"/>
    <property type="resolution" value="2.21 A"/>
    <property type="chains" value="A/B/C=1-178"/>
</dbReference>
<dbReference type="PDB" id="4YP6">
    <property type="method" value="X-ray"/>
    <property type="resolution" value="1.90 A"/>
    <property type="chains" value="A/B/C=1-178"/>
</dbReference>
<dbReference type="PDB" id="4YP7">
    <property type="method" value="X-ray"/>
    <property type="resolution" value="2.30 A"/>
    <property type="chains" value="A/B/C=1-178"/>
</dbReference>
<dbReference type="PDBsum" id="1EJ2"/>
<dbReference type="PDBsum" id="1HYB"/>
<dbReference type="PDBsum" id="1M8F"/>
<dbReference type="PDBsum" id="1M8G"/>
<dbReference type="PDBsum" id="1M8J"/>
<dbReference type="PDBsum" id="1M8K"/>
<dbReference type="PDBsum" id="4YP5"/>
<dbReference type="PDBsum" id="4YP6"/>
<dbReference type="PDBsum" id="4YP7"/>
<dbReference type="SMR" id="O26253"/>
<dbReference type="FunCoup" id="O26253">
    <property type="interactions" value="10"/>
</dbReference>
<dbReference type="STRING" id="187420.MTH_150"/>
<dbReference type="PaxDb" id="187420-MTH_150"/>
<dbReference type="EnsemblBacteria" id="AAB84656">
    <property type="protein sequence ID" value="AAB84656"/>
    <property type="gene ID" value="MTH_150"/>
</dbReference>
<dbReference type="KEGG" id="mth:MTH_150"/>
<dbReference type="PATRIC" id="fig|187420.15.peg.122"/>
<dbReference type="HOGENOM" id="CLU_108783_0_0_2"/>
<dbReference type="InParanoid" id="O26253"/>
<dbReference type="BRENDA" id="2.7.7.1">
    <property type="organism ID" value="3256"/>
</dbReference>
<dbReference type="SABIO-RK" id="O26253"/>
<dbReference type="UniPathway" id="UPA00253">
    <property type="reaction ID" value="UER00600"/>
</dbReference>
<dbReference type="EvolutionaryTrace" id="O26253"/>
<dbReference type="Proteomes" id="UP000005223">
    <property type="component" value="Chromosome"/>
</dbReference>
<dbReference type="GO" id="GO:0005737">
    <property type="term" value="C:cytoplasm"/>
    <property type="evidence" value="ECO:0007669"/>
    <property type="project" value="UniProtKB-SubCell"/>
</dbReference>
<dbReference type="GO" id="GO:0005524">
    <property type="term" value="F:ATP binding"/>
    <property type="evidence" value="ECO:0007669"/>
    <property type="project" value="UniProtKB-KW"/>
</dbReference>
<dbReference type="GO" id="GO:0000309">
    <property type="term" value="F:nicotinamide-nucleotide adenylyltransferase activity"/>
    <property type="evidence" value="ECO:0007669"/>
    <property type="project" value="UniProtKB-UniRule"/>
</dbReference>
<dbReference type="GO" id="GO:0009435">
    <property type="term" value="P:NAD biosynthetic process"/>
    <property type="evidence" value="ECO:0007669"/>
    <property type="project" value="UniProtKB-UniRule"/>
</dbReference>
<dbReference type="CDD" id="cd02166">
    <property type="entry name" value="NMNAT_Archaea"/>
    <property type="match status" value="1"/>
</dbReference>
<dbReference type="Gene3D" id="3.40.50.620">
    <property type="entry name" value="HUPs"/>
    <property type="match status" value="1"/>
</dbReference>
<dbReference type="HAMAP" id="MF_00243">
    <property type="entry name" value="NMN_adenylyltr"/>
    <property type="match status" value="1"/>
</dbReference>
<dbReference type="InterPro" id="IPR004821">
    <property type="entry name" value="Cyt_trans-like"/>
</dbReference>
<dbReference type="InterPro" id="IPR006418">
    <property type="entry name" value="NMN_Atrans_arc"/>
</dbReference>
<dbReference type="InterPro" id="IPR014729">
    <property type="entry name" value="Rossmann-like_a/b/a_fold"/>
</dbReference>
<dbReference type="NCBIfam" id="TIGR01527">
    <property type="entry name" value="arch_NMN_Atrans"/>
    <property type="match status" value="1"/>
</dbReference>
<dbReference type="NCBIfam" id="TIGR00125">
    <property type="entry name" value="cyt_tran_rel"/>
    <property type="match status" value="1"/>
</dbReference>
<dbReference type="NCBIfam" id="NF002243">
    <property type="entry name" value="PRK01153.1"/>
    <property type="match status" value="1"/>
</dbReference>
<dbReference type="PANTHER" id="PTHR21342:SF0">
    <property type="entry name" value="BIFUNCTIONAL NMN ADENYLYLTRANSFERASE_NUDIX HYDROLASE"/>
    <property type="match status" value="1"/>
</dbReference>
<dbReference type="PANTHER" id="PTHR21342">
    <property type="entry name" value="PHOSPHOPANTETHEINE ADENYLYLTRANSFERASE"/>
    <property type="match status" value="1"/>
</dbReference>
<dbReference type="Pfam" id="PF01467">
    <property type="entry name" value="CTP_transf_like"/>
    <property type="match status" value="1"/>
</dbReference>
<dbReference type="SUPFAM" id="SSF52374">
    <property type="entry name" value="Nucleotidylyl transferase"/>
    <property type="match status" value="1"/>
</dbReference>
<name>NADM_METTH</name>
<reference key="1">
    <citation type="journal article" date="1997" name="J. Bacteriol.">
        <title>Complete genome sequence of Methanobacterium thermoautotrophicum deltaH: functional analysis and comparative genomics.</title>
        <authorList>
            <person name="Smith D.R."/>
            <person name="Doucette-Stamm L.A."/>
            <person name="Deloughery C."/>
            <person name="Lee H.-M."/>
            <person name="Dubois J."/>
            <person name="Aldredge T."/>
            <person name="Bashirzadeh R."/>
            <person name="Blakely D."/>
            <person name="Cook R."/>
            <person name="Gilbert K."/>
            <person name="Harrison D."/>
            <person name="Hoang L."/>
            <person name="Keagle P."/>
            <person name="Lumm W."/>
            <person name="Pothier B."/>
            <person name="Qiu D."/>
            <person name="Spadafora R."/>
            <person name="Vicare R."/>
            <person name="Wang Y."/>
            <person name="Wierzbowski J."/>
            <person name="Gibson R."/>
            <person name="Jiwani N."/>
            <person name="Caruso A."/>
            <person name="Bush D."/>
            <person name="Safer H."/>
            <person name="Patwell D."/>
            <person name="Prabhakar S."/>
            <person name="McDougall S."/>
            <person name="Shimer G."/>
            <person name="Goyal A."/>
            <person name="Pietrovski S."/>
            <person name="Church G.M."/>
            <person name="Daniels C.J."/>
            <person name="Mao J.-I."/>
            <person name="Rice P."/>
            <person name="Noelling J."/>
            <person name="Reeve J.N."/>
        </authorList>
    </citation>
    <scope>NUCLEOTIDE SEQUENCE [LARGE SCALE GENOMIC DNA]</scope>
    <source>
        <strain>ATCC 29096 / DSM 1053 / JCM 10044 / NBRC 100330 / Delta H</strain>
    </source>
</reference>
<reference key="2">
    <citation type="journal article" date="2000" name="Nat. Struct. Biol.">
        <title>Structural proteomics of an archaeon.</title>
        <authorList>
            <person name="Christendat D."/>
            <person name="Yee A."/>
            <person name="Dharamsi A."/>
            <person name="Kluger Y."/>
            <person name="Savchenko A."/>
            <person name="Cort J.R."/>
            <person name="Booth V."/>
            <person name="Mackereth C.D."/>
            <person name="Saridakis V."/>
            <person name="Ekiel I."/>
            <person name="Kozlov G."/>
            <person name="Maxwell K.L."/>
            <person name="Wu N."/>
            <person name="McIntosh L.P."/>
            <person name="Gehring K."/>
            <person name="Kennedy M.A."/>
            <person name="Davidson A.R."/>
            <person name="Pai E.F."/>
            <person name="Gerstein M."/>
            <person name="Edwards A.M."/>
            <person name="Arrowsmith C.H."/>
        </authorList>
    </citation>
    <scope>X-RAY CRYSTALLOGRAPHY (2.2 ANGSTROMS)</scope>
</reference>
<evidence type="ECO:0000250" key="1"/>
<evidence type="ECO:0000305" key="2"/>
<evidence type="ECO:0007829" key="3">
    <source>
        <dbReference type="PDB" id="1EJ2"/>
    </source>
</evidence>
<evidence type="ECO:0007829" key="4">
    <source>
        <dbReference type="PDB" id="4YP6"/>
    </source>
</evidence>
<organism>
    <name type="scientific">Methanothermobacter thermautotrophicus (strain ATCC 29096 / DSM 1053 / JCM 10044 / NBRC 100330 / Delta H)</name>
    <name type="common">Methanobacterium thermoautotrophicum</name>
    <dbReference type="NCBI Taxonomy" id="187420"/>
    <lineage>
        <taxon>Archaea</taxon>
        <taxon>Methanobacteriati</taxon>
        <taxon>Methanobacteriota</taxon>
        <taxon>Methanomada group</taxon>
        <taxon>Methanobacteria</taxon>
        <taxon>Methanobacteriales</taxon>
        <taxon>Methanobacteriaceae</taxon>
        <taxon>Methanothermobacter</taxon>
    </lineage>
</organism>
<comment type="catalytic activity">
    <reaction>
        <text>beta-nicotinamide D-ribonucleotide + ATP + H(+) = diphosphate + NAD(+)</text>
        <dbReference type="Rhea" id="RHEA:21360"/>
        <dbReference type="ChEBI" id="CHEBI:14649"/>
        <dbReference type="ChEBI" id="CHEBI:15378"/>
        <dbReference type="ChEBI" id="CHEBI:30616"/>
        <dbReference type="ChEBI" id="CHEBI:33019"/>
        <dbReference type="ChEBI" id="CHEBI:57540"/>
        <dbReference type="EC" id="2.7.7.1"/>
    </reaction>
</comment>
<comment type="pathway">
    <text>Cofactor biosynthesis; NAD(+) biosynthesis; NAD(+) from nicotinamide D-ribonucleotide: step 1/1.</text>
</comment>
<comment type="subunit">
    <text>Homohexamer.</text>
</comment>
<comment type="subcellular location">
    <subcellularLocation>
        <location evidence="1">Cytoplasm</location>
    </subcellularLocation>
</comment>
<comment type="similarity">
    <text evidence="2">Belongs to the archaeal NMN adenylyltransferase family.</text>
</comment>
<comment type="sequence caution" evidence="2">
    <conflict type="erroneous initiation">
        <sequence resource="EMBL-CDS" id="AAB84656"/>
    </conflict>
</comment>